<name>ISY1_EMENI</name>
<comment type="function">
    <text evidence="1">Involved in pre-mRNA splicing.</text>
</comment>
<comment type="subunit">
    <text evidence="1">Associated with the spliceosome.</text>
</comment>
<comment type="subcellular location">
    <subcellularLocation>
        <location evidence="1">Cytoplasm</location>
    </subcellularLocation>
    <subcellularLocation>
        <location evidence="1">Nucleus</location>
    </subcellularLocation>
</comment>
<comment type="similarity">
    <text evidence="3">Belongs to the ISY1 family.</text>
</comment>
<protein>
    <recommendedName>
        <fullName>Pre-mRNA-splicing factor isy1</fullName>
    </recommendedName>
</protein>
<keyword id="KW-0963">Cytoplasm</keyword>
<keyword id="KW-0507">mRNA processing</keyword>
<keyword id="KW-0508">mRNA splicing</keyword>
<keyword id="KW-0539">Nucleus</keyword>
<keyword id="KW-1185">Reference proteome</keyword>
<keyword id="KW-0747">Spliceosome</keyword>
<reference key="1">
    <citation type="journal article" date="2005" name="Nature">
        <title>Sequencing of Aspergillus nidulans and comparative analysis with A. fumigatus and A. oryzae.</title>
        <authorList>
            <person name="Galagan J.E."/>
            <person name="Calvo S.E."/>
            <person name="Cuomo C."/>
            <person name="Ma L.-J."/>
            <person name="Wortman J.R."/>
            <person name="Batzoglou S."/>
            <person name="Lee S.-I."/>
            <person name="Bastuerkmen M."/>
            <person name="Spevak C.C."/>
            <person name="Clutterbuck J."/>
            <person name="Kapitonov V."/>
            <person name="Jurka J."/>
            <person name="Scazzocchio C."/>
            <person name="Farman M.L."/>
            <person name="Butler J."/>
            <person name="Purcell S."/>
            <person name="Harris S."/>
            <person name="Braus G.H."/>
            <person name="Draht O."/>
            <person name="Busch S."/>
            <person name="D'Enfert C."/>
            <person name="Bouchier C."/>
            <person name="Goldman G.H."/>
            <person name="Bell-Pedersen D."/>
            <person name="Griffiths-Jones S."/>
            <person name="Doonan J.H."/>
            <person name="Yu J."/>
            <person name="Vienken K."/>
            <person name="Pain A."/>
            <person name="Freitag M."/>
            <person name="Selker E.U."/>
            <person name="Archer D.B."/>
            <person name="Penalva M.A."/>
            <person name="Oakley B.R."/>
            <person name="Momany M."/>
            <person name="Tanaka T."/>
            <person name="Kumagai T."/>
            <person name="Asai K."/>
            <person name="Machida M."/>
            <person name="Nierman W.C."/>
            <person name="Denning D.W."/>
            <person name="Caddick M.X."/>
            <person name="Hynes M."/>
            <person name="Paoletti M."/>
            <person name="Fischer R."/>
            <person name="Miller B.L."/>
            <person name="Dyer P.S."/>
            <person name="Sachs M.S."/>
            <person name="Osmani S.A."/>
            <person name="Birren B.W."/>
        </authorList>
    </citation>
    <scope>NUCLEOTIDE SEQUENCE [LARGE SCALE GENOMIC DNA]</scope>
    <source>
        <strain>FGSC A4 / ATCC 38163 / CBS 112.46 / NRRL 194 / M139</strain>
    </source>
</reference>
<reference key="2">
    <citation type="journal article" date="2009" name="Fungal Genet. Biol.">
        <title>The 2008 update of the Aspergillus nidulans genome annotation: a community effort.</title>
        <authorList>
            <person name="Wortman J.R."/>
            <person name="Gilsenan J.M."/>
            <person name="Joardar V."/>
            <person name="Deegan J."/>
            <person name="Clutterbuck J."/>
            <person name="Andersen M.R."/>
            <person name="Archer D."/>
            <person name="Bencina M."/>
            <person name="Braus G."/>
            <person name="Coutinho P."/>
            <person name="von Dohren H."/>
            <person name="Doonan J."/>
            <person name="Driessen A.J."/>
            <person name="Durek P."/>
            <person name="Espeso E."/>
            <person name="Fekete E."/>
            <person name="Flipphi M."/>
            <person name="Estrada C.G."/>
            <person name="Geysens S."/>
            <person name="Goldman G."/>
            <person name="de Groot P.W."/>
            <person name="Hansen K."/>
            <person name="Harris S.D."/>
            <person name="Heinekamp T."/>
            <person name="Helmstaedt K."/>
            <person name="Henrissat B."/>
            <person name="Hofmann G."/>
            <person name="Homan T."/>
            <person name="Horio T."/>
            <person name="Horiuchi H."/>
            <person name="James S."/>
            <person name="Jones M."/>
            <person name="Karaffa L."/>
            <person name="Karanyi Z."/>
            <person name="Kato M."/>
            <person name="Keller N."/>
            <person name="Kelly D.E."/>
            <person name="Kiel J.A."/>
            <person name="Kim J.M."/>
            <person name="van der Klei I.J."/>
            <person name="Klis F.M."/>
            <person name="Kovalchuk A."/>
            <person name="Krasevec N."/>
            <person name="Kubicek C.P."/>
            <person name="Liu B."/>
            <person name="Maccabe A."/>
            <person name="Meyer V."/>
            <person name="Mirabito P."/>
            <person name="Miskei M."/>
            <person name="Mos M."/>
            <person name="Mullins J."/>
            <person name="Nelson D.R."/>
            <person name="Nielsen J."/>
            <person name="Oakley B.R."/>
            <person name="Osmani S.A."/>
            <person name="Pakula T."/>
            <person name="Paszewski A."/>
            <person name="Paulsen I."/>
            <person name="Pilsyk S."/>
            <person name="Pocsi I."/>
            <person name="Punt P.J."/>
            <person name="Ram A.F."/>
            <person name="Ren Q."/>
            <person name="Robellet X."/>
            <person name="Robson G."/>
            <person name="Seiboth B."/>
            <person name="van Solingen P."/>
            <person name="Specht T."/>
            <person name="Sun J."/>
            <person name="Taheri-Talesh N."/>
            <person name="Takeshita N."/>
            <person name="Ussery D."/>
            <person name="vanKuyk P.A."/>
            <person name="Visser H."/>
            <person name="van de Vondervoort P.J."/>
            <person name="de Vries R.P."/>
            <person name="Walton J."/>
            <person name="Xiang X."/>
            <person name="Xiong Y."/>
            <person name="Zeng A.P."/>
            <person name="Brandt B.W."/>
            <person name="Cornell M.J."/>
            <person name="van den Hondel C.A."/>
            <person name="Visser J."/>
            <person name="Oliver S.G."/>
            <person name="Turner G."/>
        </authorList>
    </citation>
    <scope>GENOME REANNOTATION</scope>
    <source>
        <strain>FGSC A4 / ATCC 38163 / CBS 112.46 / NRRL 194 / M139</strain>
    </source>
</reference>
<proteinExistence type="inferred from homology"/>
<evidence type="ECO:0000250" key="1"/>
<evidence type="ECO:0000256" key="2">
    <source>
        <dbReference type="SAM" id="MobiDB-lite"/>
    </source>
</evidence>
<evidence type="ECO:0000305" key="3"/>
<accession>Q5B423</accession>
<accession>C8VAW9</accession>
<gene>
    <name type="primary">isy1</name>
    <name type="ORF">AN4707</name>
</gene>
<sequence length="256" mass="29273">MARNSEKAQSMLFRFRAQQAADLGIIDIGRTRRPKAITSVDSIPACEKWRGQVLKEISRKVSRIQEPSLSDHQIRDLNDEINKLMREKWAWEMQIRNMGGPNYMRGSGRVYDDEGREIPGGGKGYRYFGRARELPGVKEMLEAAARRGRGPAEEEEDDGKTVGRGGDIATKKVDANYFGYGLDEEDGTLLAYEMQREKEAVEKLRKEGEDEEDVEDGWEPLPGDAGDGIEWRLPTLEEVQEELVDRRRRRLLEKIS</sequence>
<organism>
    <name type="scientific">Emericella nidulans (strain FGSC A4 / ATCC 38163 / CBS 112.46 / NRRL 194 / M139)</name>
    <name type="common">Aspergillus nidulans</name>
    <dbReference type="NCBI Taxonomy" id="227321"/>
    <lineage>
        <taxon>Eukaryota</taxon>
        <taxon>Fungi</taxon>
        <taxon>Dikarya</taxon>
        <taxon>Ascomycota</taxon>
        <taxon>Pezizomycotina</taxon>
        <taxon>Eurotiomycetes</taxon>
        <taxon>Eurotiomycetidae</taxon>
        <taxon>Eurotiales</taxon>
        <taxon>Aspergillaceae</taxon>
        <taxon>Aspergillus</taxon>
        <taxon>Aspergillus subgen. Nidulantes</taxon>
    </lineage>
</organism>
<dbReference type="EMBL" id="AACD01000080">
    <property type="protein sequence ID" value="EAA60749.1"/>
    <property type="molecule type" value="Genomic_DNA"/>
</dbReference>
<dbReference type="EMBL" id="BN001303">
    <property type="protein sequence ID" value="CBF76955.1"/>
    <property type="molecule type" value="Genomic_DNA"/>
</dbReference>
<dbReference type="RefSeq" id="XP_662311.1">
    <property type="nucleotide sequence ID" value="XM_657219.1"/>
</dbReference>
<dbReference type="SMR" id="Q5B423"/>
<dbReference type="FunCoup" id="Q5B423">
    <property type="interactions" value="211"/>
</dbReference>
<dbReference type="STRING" id="227321.Q5B423"/>
<dbReference type="EnsemblFungi" id="CBF76955">
    <property type="protein sequence ID" value="CBF76955"/>
    <property type="gene ID" value="ANIA_04707"/>
</dbReference>
<dbReference type="KEGG" id="ani:ANIA_04707"/>
<dbReference type="VEuPathDB" id="FungiDB:AN4707"/>
<dbReference type="eggNOG" id="KOG3068">
    <property type="taxonomic scope" value="Eukaryota"/>
</dbReference>
<dbReference type="HOGENOM" id="CLU_043453_2_0_1"/>
<dbReference type="InParanoid" id="Q5B423"/>
<dbReference type="OMA" id="YHWERRI"/>
<dbReference type="OrthoDB" id="1739576at2759"/>
<dbReference type="Proteomes" id="UP000000560">
    <property type="component" value="Chromosome III"/>
</dbReference>
<dbReference type="GO" id="GO:0071013">
    <property type="term" value="C:catalytic step 2 spliceosome"/>
    <property type="evidence" value="ECO:0000318"/>
    <property type="project" value="GO_Central"/>
</dbReference>
<dbReference type="GO" id="GO:0005737">
    <property type="term" value="C:cytoplasm"/>
    <property type="evidence" value="ECO:0007669"/>
    <property type="project" value="UniProtKB-SubCell"/>
</dbReference>
<dbReference type="GO" id="GO:0071014">
    <property type="term" value="C:post-mRNA release spliceosomal complex"/>
    <property type="evidence" value="ECO:0000318"/>
    <property type="project" value="GO_Central"/>
</dbReference>
<dbReference type="GO" id="GO:0071020">
    <property type="term" value="C:post-spliceosomal complex"/>
    <property type="evidence" value="ECO:0000318"/>
    <property type="project" value="GO_Central"/>
</dbReference>
<dbReference type="GO" id="GO:0000974">
    <property type="term" value="C:Prp19 complex"/>
    <property type="evidence" value="ECO:0000318"/>
    <property type="project" value="GO_Central"/>
</dbReference>
<dbReference type="GO" id="GO:0000350">
    <property type="term" value="P:generation of catalytic spliceosome for second transesterification step"/>
    <property type="evidence" value="ECO:0000318"/>
    <property type="project" value="GO_Central"/>
</dbReference>
<dbReference type="GO" id="GO:0000389">
    <property type="term" value="P:mRNA 3'-splice site recognition"/>
    <property type="evidence" value="ECO:0000318"/>
    <property type="project" value="GO_Central"/>
</dbReference>
<dbReference type="FunFam" id="1.10.287.660:FF:000001">
    <property type="entry name" value="pre-mRNA-splicing factor ISY1 homolog"/>
    <property type="match status" value="1"/>
</dbReference>
<dbReference type="Gene3D" id="1.10.287.660">
    <property type="entry name" value="Helix hairpin bin"/>
    <property type="match status" value="1"/>
</dbReference>
<dbReference type="InterPro" id="IPR029012">
    <property type="entry name" value="Helix_hairpin_bin_sf"/>
</dbReference>
<dbReference type="InterPro" id="IPR009360">
    <property type="entry name" value="Isy1"/>
</dbReference>
<dbReference type="InterPro" id="IPR037200">
    <property type="entry name" value="Isy1_sf"/>
</dbReference>
<dbReference type="PANTHER" id="PTHR13021">
    <property type="entry name" value="PRE-MRNA-SPLICING FACTOR ISY1"/>
    <property type="match status" value="1"/>
</dbReference>
<dbReference type="Pfam" id="PF06246">
    <property type="entry name" value="Isy1"/>
    <property type="match status" value="1"/>
</dbReference>
<dbReference type="SUPFAM" id="SSF140102">
    <property type="entry name" value="ISY1 domain-like"/>
    <property type="match status" value="1"/>
</dbReference>
<feature type="chain" id="PRO_0000192969" description="Pre-mRNA-splicing factor isy1">
    <location>
        <begin position="1"/>
        <end position="256"/>
    </location>
</feature>
<feature type="region of interest" description="Disordered" evidence="2">
    <location>
        <begin position="145"/>
        <end position="167"/>
    </location>
</feature>
<feature type="region of interest" description="Disordered" evidence="2">
    <location>
        <begin position="201"/>
        <end position="232"/>
    </location>
</feature>
<feature type="compositionally biased region" description="Acidic residues" evidence="2">
    <location>
        <begin position="209"/>
        <end position="218"/>
    </location>
</feature>